<feature type="chain" id="PRO_1000098805" description="Protease HtpX homolog">
    <location>
        <begin position="1"/>
        <end position="293"/>
    </location>
</feature>
<feature type="transmembrane region" description="Helical" evidence="1">
    <location>
        <begin position="4"/>
        <end position="24"/>
    </location>
</feature>
<feature type="transmembrane region" description="Helical" evidence="1">
    <location>
        <begin position="40"/>
        <end position="60"/>
    </location>
</feature>
<feature type="transmembrane region" description="Helical" evidence="1">
    <location>
        <begin position="161"/>
        <end position="181"/>
    </location>
</feature>
<feature type="transmembrane region" description="Helical" evidence="1">
    <location>
        <begin position="197"/>
        <end position="217"/>
    </location>
</feature>
<feature type="active site" evidence="1">
    <location>
        <position position="147"/>
    </location>
</feature>
<feature type="binding site" evidence="1">
    <location>
        <position position="146"/>
    </location>
    <ligand>
        <name>Zn(2+)</name>
        <dbReference type="ChEBI" id="CHEBI:29105"/>
        <note>catalytic</note>
    </ligand>
</feature>
<feature type="binding site" evidence="1">
    <location>
        <position position="150"/>
    </location>
    <ligand>
        <name>Zn(2+)</name>
        <dbReference type="ChEBI" id="CHEBI:29105"/>
        <note>catalytic</note>
    </ligand>
</feature>
<feature type="binding site" evidence="1">
    <location>
        <position position="223"/>
    </location>
    <ligand>
        <name>Zn(2+)</name>
        <dbReference type="ChEBI" id="CHEBI:29105"/>
        <note>catalytic</note>
    </ligand>
</feature>
<dbReference type="EC" id="3.4.24.-" evidence="1"/>
<dbReference type="EMBL" id="AM902716">
    <property type="protein sequence ID" value="CAP43411.1"/>
    <property type="molecule type" value="Genomic_DNA"/>
</dbReference>
<dbReference type="SMR" id="A9ITD6"/>
<dbReference type="STRING" id="94624.Bpet3069"/>
<dbReference type="MEROPS" id="M48.002"/>
<dbReference type="KEGG" id="bpt:Bpet3069"/>
<dbReference type="eggNOG" id="COG0501">
    <property type="taxonomic scope" value="Bacteria"/>
</dbReference>
<dbReference type="Proteomes" id="UP000001225">
    <property type="component" value="Chromosome"/>
</dbReference>
<dbReference type="GO" id="GO:0005886">
    <property type="term" value="C:plasma membrane"/>
    <property type="evidence" value="ECO:0007669"/>
    <property type="project" value="UniProtKB-SubCell"/>
</dbReference>
<dbReference type="GO" id="GO:0004222">
    <property type="term" value="F:metalloendopeptidase activity"/>
    <property type="evidence" value="ECO:0007669"/>
    <property type="project" value="UniProtKB-UniRule"/>
</dbReference>
<dbReference type="GO" id="GO:0008270">
    <property type="term" value="F:zinc ion binding"/>
    <property type="evidence" value="ECO:0007669"/>
    <property type="project" value="UniProtKB-UniRule"/>
</dbReference>
<dbReference type="GO" id="GO:0006508">
    <property type="term" value="P:proteolysis"/>
    <property type="evidence" value="ECO:0007669"/>
    <property type="project" value="UniProtKB-KW"/>
</dbReference>
<dbReference type="CDD" id="cd07335">
    <property type="entry name" value="M48B_HtpX_like"/>
    <property type="match status" value="1"/>
</dbReference>
<dbReference type="Gene3D" id="3.30.2010.10">
    <property type="entry name" value="Metalloproteases ('zincins'), catalytic domain"/>
    <property type="match status" value="1"/>
</dbReference>
<dbReference type="HAMAP" id="MF_00188">
    <property type="entry name" value="Pept_M48_protease_HtpX"/>
    <property type="match status" value="1"/>
</dbReference>
<dbReference type="InterPro" id="IPR050083">
    <property type="entry name" value="HtpX_protease"/>
</dbReference>
<dbReference type="InterPro" id="IPR022919">
    <property type="entry name" value="Pept_M48_protease_HtpX"/>
</dbReference>
<dbReference type="InterPro" id="IPR001915">
    <property type="entry name" value="Peptidase_M48"/>
</dbReference>
<dbReference type="NCBIfam" id="NF003965">
    <property type="entry name" value="PRK05457.1"/>
    <property type="match status" value="1"/>
</dbReference>
<dbReference type="PANTHER" id="PTHR43221">
    <property type="entry name" value="PROTEASE HTPX"/>
    <property type="match status" value="1"/>
</dbReference>
<dbReference type="PANTHER" id="PTHR43221:SF1">
    <property type="entry name" value="PROTEASE HTPX"/>
    <property type="match status" value="1"/>
</dbReference>
<dbReference type="Pfam" id="PF01435">
    <property type="entry name" value="Peptidase_M48"/>
    <property type="match status" value="1"/>
</dbReference>
<name>HTPX_BORPD</name>
<accession>A9ITD6</accession>
<organism>
    <name type="scientific">Bordetella petrii (strain ATCC BAA-461 / DSM 12804 / CCUG 43448)</name>
    <dbReference type="NCBI Taxonomy" id="340100"/>
    <lineage>
        <taxon>Bacteria</taxon>
        <taxon>Pseudomonadati</taxon>
        <taxon>Pseudomonadota</taxon>
        <taxon>Betaproteobacteria</taxon>
        <taxon>Burkholderiales</taxon>
        <taxon>Alcaligenaceae</taxon>
        <taxon>Bordetella</taxon>
    </lineage>
</organism>
<proteinExistence type="inferred from homology"/>
<protein>
    <recommendedName>
        <fullName evidence="1">Protease HtpX homolog</fullName>
        <ecNumber evidence="1">3.4.24.-</ecNumber>
    </recommendedName>
</protein>
<sequence>MKRIFLFIVTNLAVMVVLSATLRVLGVDRYITAQGINFQSLLILSVVIGFTGAIISLLISKPMAKWSTGARVIDPAAPGGSREAWLVETVHQLADRAGIGHPEVAIYDGSPNAFATGAFKNDSLVAVSTGLLDSMTEEEVAAVLGHEVAHIANGDMITLTLIQGVVNTFVVFLARVVGYFIDRTVFRNERGVGAGYFITVLVCEIIFGLLASIIVAWFSRQREYRADAGSAQLMGSREPMMRALARLGGLEPGELPKSFEASGIAGKGGLGAIFASHPPIQARIAALQHMRVV</sequence>
<comment type="cofactor">
    <cofactor evidence="1">
        <name>Zn(2+)</name>
        <dbReference type="ChEBI" id="CHEBI:29105"/>
    </cofactor>
    <text evidence="1">Binds 1 zinc ion per subunit.</text>
</comment>
<comment type="subcellular location">
    <subcellularLocation>
        <location evidence="1">Cell inner membrane</location>
        <topology evidence="1">Multi-pass membrane protein</topology>
    </subcellularLocation>
</comment>
<comment type="similarity">
    <text evidence="1">Belongs to the peptidase M48B family.</text>
</comment>
<evidence type="ECO:0000255" key="1">
    <source>
        <dbReference type="HAMAP-Rule" id="MF_00188"/>
    </source>
</evidence>
<reference key="1">
    <citation type="journal article" date="2008" name="BMC Genomics">
        <title>The missing link: Bordetella petrii is endowed with both the metabolic versatility of environmental bacteria and virulence traits of pathogenic Bordetellae.</title>
        <authorList>
            <person name="Gross R."/>
            <person name="Guzman C.A."/>
            <person name="Sebaihia M."/>
            <person name="Martin dos Santos V.A.P."/>
            <person name="Pieper D.H."/>
            <person name="Koebnik R."/>
            <person name="Lechner M."/>
            <person name="Bartels D."/>
            <person name="Buhrmester J."/>
            <person name="Choudhuri J.V."/>
            <person name="Ebensen T."/>
            <person name="Gaigalat L."/>
            <person name="Herrmann S."/>
            <person name="Khachane A.N."/>
            <person name="Larisch C."/>
            <person name="Link S."/>
            <person name="Linke B."/>
            <person name="Meyer F."/>
            <person name="Mormann S."/>
            <person name="Nakunst D."/>
            <person name="Rueckert C."/>
            <person name="Schneiker-Bekel S."/>
            <person name="Schulze K."/>
            <person name="Voerholter F.-J."/>
            <person name="Yevsa T."/>
            <person name="Engle J.T."/>
            <person name="Goldman W.E."/>
            <person name="Puehler A."/>
            <person name="Goebel U.B."/>
            <person name="Goesmann A."/>
            <person name="Bloecker H."/>
            <person name="Kaiser O."/>
            <person name="Martinez-Arias R."/>
        </authorList>
    </citation>
    <scope>NUCLEOTIDE SEQUENCE [LARGE SCALE GENOMIC DNA]</scope>
    <source>
        <strain>ATCC BAA-461 / DSM 12804 / CCUG 43448</strain>
    </source>
</reference>
<gene>
    <name evidence="1" type="primary">htpX</name>
    <name type="ordered locus">Bpet3069</name>
</gene>
<keyword id="KW-0997">Cell inner membrane</keyword>
<keyword id="KW-1003">Cell membrane</keyword>
<keyword id="KW-0378">Hydrolase</keyword>
<keyword id="KW-0472">Membrane</keyword>
<keyword id="KW-0479">Metal-binding</keyword>
<keyword id="KW-0482">Metalloprotease</keyword>
<keyword id="KW-0645">Protease</keyword>
<keyword id="KW-0812">Transmembrane</keyword>
<keyword id="KW-1133">Transmembrane helix</keyword>
<keyword id="KW-0862">Zinc</keyword>